<reference key="1">
    <citation type="journal article" date="1991" name="Gene">
        <title>A Mycoplasma hyorhinis protein with sequence similarities to nucleotide-binding enzymes.</title>
        <authorList>
            <person name="Notarnicola S.M."/>
            <person name="McIntosh M.A."/>
            <person name="Wise K.S."/>
        </authorList>
    </citation>
    <scope>NUCLEOTIDE SEQUENCE [MRNA]</scope>
    <scope>PARTIAL PROTEIN SEQUENCE</scope>
</reference>
<organism>
    <name type="scientific">Mesomycoplasma hyorhinis</name>
    <name type="common">Mycoplasma hyorhinis</name>
    <dbReference type="NCBI Taxonomy" id="2100"/>
    <lineage>
        <taxon>Bacteria</taxon>
        <taxon>Bacillati</taxon>
        <taxon>Mycoplasmatota</taxon>
        <taxon>Mycoplasmoidales</taxon>
        <taxon>Metamycoplasmataceae</taxon>
        <taxon>Mesomycoplasma</taxon>
    </lineage>
</organism>
<name>SMC_MESHY</name>
<evidence type="ECO:0000255" key="1">
    <source>
        <dbReference type="HAMAP-Rule" id="MF_01894"/>
    </source>
</evidence>
<comment type="function">
    <text evidence="1">Required for chromosome condensation and partitioning.</text>
</comment>
<comment type="subunit">
    <text evidence="1">Homodimer.</text>
</comment>
<comment type="subcellular location">
    <subcellularLocation>
        <location>Cytoplasm</location>
    </subcellularLocation>
</comment>
<comment type="domain">
    <text evidence="1">Contains large globular domains required for ATP hydrolysis at each terminus and a third globular domain forming a flexible SMC hinge near the middle of the molecule. These domains are separated by coiled-coil structures.</text>
</comment>
<comment type="similarity">
    <text evidence="1">Belongs to the SMC family.</text>
</comment>
<proteinExistence type="evidence at protein level"/>
<dbReference type="EMBL" id="M34956">
    <property type="protein sequence ID" value="AAA25423.1"/>
    <property type="molecule type" value="mRNA"/>
</dbReference>
<dbReference type="PIR" id="JQ0894">
    <property type="entry name" value="JQ0894"/>
</dbReference>
<dbReference type="SMR" id="P41508"/>
<dbReference type="GO" id="GO:0005694">
    <property type="term" value="C:chromosome"/>
    <property type="evidence" value="ECO:0007669"/>
    <property type="project" value="InterPro"/>
</dbReference>
<dbReference type="GO" id="GO:0005737">
    <property type="term" value="C:cytoplasm"/>
    <property type="evidence" value="ECO:0007669"/>
    <property type="project" value="UniProtKB-SubCell"/>
</dbReference>
<dbReference type="GO" id="GO:0005524">
    <property type="term" value="F:ATP binding"/>
    <property type="evidence" value="ECO:0007669"/>
    <property type="project" value="UniProtKB-UniRule"/>
</dbReference>
<dbReference type="GO" id="GO:0016887">
    <property type="term" value="F:ATP hydrolysis activity"/>
    <property type="evidence" value="ECO:0007669"/>
    <property type="project" value="InterPro"/>
</dbReference>
<dbReference type="GO" id="GO:0003677">
    <property type="term" value="F:DNA binding"/>
    <property type="evidence" value="ECO:0007669"/>
    <property type="project" value="UniProtKB-UniRule"/>
</dbReference>
<dbReference type="GO" id="GO:0030261">
    <property type="term" value="P:chromosome condensation"/>
    <property type="evidence" value="ECO:0007669"/>
    <property type="project" value="InterPro"/>
</dbReference>
<dbReference type="GO" id="GO:0007059">
    <property type="term" value="P:chromosome segregation"/>
    <property type="evidence" value="ECO:0007669"/>
    <property type="project" value="UniProtKB-UniRule"/>
</dbReference>
<dbReference type="GO" id="GO:0006260">
    <property type="term" value="P:DNA replication"/>
    <property type="evidence" value="ECO:0007669"/>
    <property type="project" value="UniProtKB-UniRule"/>
</dbReference>
<dbReference type="GO" id="GO:0007062">
    <property type="term" value="P:sister chromatid cohesion"/>
    <property type="evidence" value="ECO:0007669"/>
    <property type="project" value="InterPro"/>
</dbReference>
<dbReference type="Gene3D" id="1.20.1060.20">
    <property type="match status" value="1"/>
</dbReference>
<dbReference type="Gene3D" id="3.30.70.1620">
    <property type="match status" value="1"/>
</dbReference>
<dbReference type="Gene3D" id="3.40.50.300">
    <property type="entry name" value="P-loop containing nucleotide triphosphate hydrolases"/>
    <property type="match status" value="2"/>
</dbReference>
<dbReference type="HAMAP" id="MF_01894">
    <property type="entry name" value="Smc_prok"/>
    <property type="match status" value="1"/>
</dbReference>
<dbReference type="InterPro" id="IPR027417">
    <property type="entry name" value="P-loop_NTPase"/>
</dbReference>
<dbReference type="InterPro" id="IPR003395">
    <property type="entry name" value="RecF/RecN/SMC_N"/>
</dbReference>
<dbReference type="InterPro" id="IPR024704">
    <property type="entry name" value="SMC"/>
</dbReference>
<dbReference type="InterPro" id="IPR010935">
    <property type="entry name" value="SMC_hinge"/>
</dbReference>
<dbReference type="InterPro" id="IPR036277">
    <property type="entry name" value="SMC_hinge_sf"/>
</dbReference>
<dbReference type="InterPro" id="IPR011890">
    <property type="entry name" value="SMC_prok"/>
</dbReference>
<dbReference type="PANTHER" id="PTHR43977">
    <property type="entry name" value="STRUCTURAL MAINTENANCE OF CHROMOSOMES PROTEIN 3"/>
    <property type="match status" value="1"/>
</dbReference>
<dbReference type="Pfam" id="PF06470">
    <property type="entry name" value="SMC_hinge"/>
    <property type="match status" value="1"/>
</dbReference>
<dbReference type="Pfam" id="PF02463">
    <property type="entry name" value="SMC_N"/>
    <property type="match status" value="2"/>
</dbReference>
<dbReference type="PIRSF" id="PIRSF005719">
    <property type="entry name" value="SMC"/>
    <property type="match status" value="1"/>
</dbReference>
<dbReference type="SMART" id="SM00968">
    <property type="entry name" value="SMC_hinge"/>
    <property type="match status" value="1"/>
</dbReference>
<dbReference type="SUPFAM" id="SSF52540">
    <property type="entry name" value="P-loop containing nucleoside triphosphate hydrolases"/>
    <property type="match status" value="1"/>
</dbReference>
<dbReference type="SUPFAM" id="SSF75553">
    <property type="entry name" value="Smc hinge domain"/>
    <property type="match status" value="1"/>
</dbReference>
<feature type="chain" id="PRO_0000119026" description="Chromosome partition protein Smc">
    <location>
        <begin position="1"/>
        <end position="979"/>
    </location>
</feature>
<feature type="domain" description="SMC hinge">
    <location>
        <begin position="419"/>
        <end position="538"/>
    </location>
</feature>
<feature type="coiled-coil region" evidence="1">
    <location>
        <begin position="169"/>
        <end position="400"/>
    </location>
</feature>
<feature type="coiled-coil region" evidence="1">
    <location>
        <begin position="572"/>
        <end position="716"/>
    </location>
</feature>
<feature type="coiled-coil region" evidence="1">
    <location>
        <begin position="750"/>
        <end position="818"/>
    </location>
</feature>
<feature type="binding site" evidence="1">
    <location>
        <begin position="33"/>
        <end position="40"/>
    </location>
    <ligand>
        <name>ATP</name>
        <dbReference type="ChEBI" id="CHEBI:30616"/>
    </ligand>
</feature>
<gene>
    <name evidence="1" type="primary">smc</name>
</gene>
<accession>P41508</accession>
<sequence length="979" mass="110566">MLKLIKIEIEGFKSFADPISINFDGSVVGIVGPNGSGKSNINDAIRWVLGEQSAKQLRGLNMDDVIFAGSKTVKPQEKAMVKLTFKNEDAIEETKQIFTISRLLKRGQGTNEYFYNDQPVRYKDIKNLAVESGISKSSLAIISQGTISEIAEATPEQRKAVIEEAAGTSKYKLDKEEAQKKLIRTNDAIDKLQGAIKELERQVNSLDKQASKAKIYLEKSKALESVEVGLIVNDLNFFNEKLNNLNTSLLEVEQQRNDLELNIQTYESSISQTVHFKTEVESSIQEITSKLDNLKNALSEINLQEARIEERRKLIISGEIVVDQKTKIEEIKKQVESLKIQINASKQREIELDQQLTRLNAKANSLKLQENDINKEIGVLLEKKSAAAANINILKQQFENKSFLSKGIKTIKDNSFLFDGYIGLASELFKVESEFSLAIETVLGAALNQIVMKTSEDVLQAIDFLKKNLSGKATFIPLTSIKEREVREDHLLVLKGQKGFLGVAKELIEFDTQFNKLFGFLLGNILVVDNVDNANRIAKILDHKYTIVSLEGDLFRPGGTITGGSKLERTSILNYDIKIKEHTNTLKFAEDQIHDLKIKQQTIYNEIETVNSTIQQVKIEANSINSKLNILNEELNNLKLNASEIFKEQQEDQESLNLSFDSEKLNIEKQISTLTIELNSKKDRLTNLISEQGKGETKKQELDAKLRKLNTQHSDSITEQNRAKFLVEQNQKRLSEHYKLTLEAASEQYSLDLDIEQARHFVDSLKKELKELGNVNLEAITEFEEVNQRYQEKKQYIEELTTAKSKIEEAISDLDKIIINKTTEIVNLVNNEFNMVFQKMFGGGKAEIHFTDKNDILNSGVEISAQPPGKTIKNLRLFSGGEKAIIAISLLFAILKARPIPLCILDEVEAALDESNVIRYVEFLKLLKENTQFLIITHRSGTMSRVDQLLGVTMQKRGVTSIFSVELSKAKEMLKDELK</sequence>
<protein>
    <recommendedName>
        <fullName evidence="1">Chromosome partition protein Smc</fullName>
    </recommendedName>
    <alternativeName>
        <fullName>Protein P115</fullName>
    </alternativeName>
</protein>
<keyword id="KW-0067">ATP-binding</keyword>
<keyword id="KW-0175">Coiled coil</keyword>
<keyword id="KW-0963">Cytoplasm</keyword>
<keyword id="KW-0903">Direct protein sequencing</keyword>
<keyword id="KW-0238">DNA-binding</keyword>
<keyword id="KW-0547">Nucleotide-binding</keyword>